<reference key="1">
    <citation type="journal article" date="2003" name="Science">
        <title>Genome of Geobacter sulfurreducens: metal reduction in subsurface environments.</title>
        <authorList>
            <person name="Methe B.A."/>
            <person name="Nelson K.E."/>
            <person name="Eisen J.A."/>
            <person name="Paulsen I.T."/>
            <person name="Nelson W.C."/>
            <person name="Heidelberg J.F."/>
            <person name="Wu D."/>
            <person name="Wu M."/>
            <person name="Ward N.L."/>
            <person name="Beanan M.J."/>
            <person name="Dodson R.J."/>
            <person name="Madupu R."/>
            <person name="Brinkac L.M."/>
            <person name="Daugherty S.C."/>
            <person name="DeBoy R.T."/>
            <person name="Durkin A.S."/>
            <person name="Gwinn M.L."/>
            <person name="Kolonay J.F."/>
            <person name="Sullivan S.A."/>
            <person name="Haft D.H."/>
            <person name="Selengut J."/>
            <person name="Davidsen T.M."/>
            <person name="Zafar N."/>
            <person name="White O."/>
            <person name="Tran B."/>
            <person name="Romero C."/>
            <person name="Forberger H.A."/>
            <person name="Weidman J.F."/>
            <person name="Khouri H.M."/>
            <person name="Feldblyum T.V."/>
            <person name="Utterback T.R."/>
            <person name="Van Aken S.E."/>
            <person name="Lovley D.R."/>
            <person name="Fraser C.M."/>
        </authorList>
    </citation>
    <scope>NUCLEOTIDE SEQUENCE [LARGE SCALE GENOMIC DNA]</scope>
    <source>
        <strain>ATCC 51573 / DSM 12127 / PCA</strain>
    </source>
</reference>
<accession>Q74C11</accession>
<dbReference type="EC" id="2.3.1.234" evidence="1"/>
<dbReference type="EMBL" id="AE017180">
    <property type="protein sequence ID" value="AAR35241.1"/>
    <property type="molecule type" value="Genomic_DNA"/>
</dbReference>
<dbReference type="RefSeq" id="NP_952914.1">
    <property type="nucleotide sequence ID" value="NC_002939.5"/>
</dbReference>
<dbReference type="RefSeq" id="WP_010942510.1">
    <property type="nucleotide sequence ID" value="NC_002939.5"/>
</dbReference>
<dbReference type="SMR" id="Q74C11"/>
<dbReference type="FunCoup" id="Q74C11">
    <property type="interactions" value="537"/>
</dbReference>
<dbReference type="STRING" id="243231.GSU1865"/>
<dbReference type="EnsemblBacteria" id="AAR35241">
    <property type="protein sequence ID" value="AAR35241"/>
    <property type="gene ID" value="GSU1865"/>
</dbReference>
<dbReference type="KEGG" id="gsu:GSU1865"/>
<dbReference type="PATRIC" id="fig|243231.5.peg.1903"/>
<dbReference type="eggNOG" id="COG0533">
    <property type="taxonomic scope" value="Bacteria"/>
</dbReference>
<dbReference type="HOGENOM" id="CLU_023208_0_2_7"/>
<dbReference type="InParanoid" id="Q74C11"/>
<dbReference type="OrthoDB" id="9806197at2"/>
<dbReference type="Proteomes" id="UP000000577">
    <property type="component" value="Chromosome"/>
</dbReference>
<dbReference type="GO" id="GO:0005737">
    <property type="term" value="C:cytoplasm"/>
    <property type="evidence" value="ECO:0007669"/>
    <property type="project" value="UniProtKB-SubCell"/>
</dbReference>
<dbReference type="GO" id="GO:0005506">
    <property type="term" value="F:iron ion binding"/>
    <property type="evidence" value="ECO:0007669"/>
    <property type="project" value="UniProtKB-UniRule"/>
</dbReference>
<dbReference type="GO" id="GO:0061711">
    <property type="term" value="F:N(6)-L-threonylcarbamoyladenine synthase activity"/>
    <property type="evidence" value="ECO:0007669"/>
    <property type="project" value="UniProtKB-EC"/>
</dbReference>
<dbReference type="GO" id="GO:0002949">
    <property type="term" value="P:tRNA threonylcarbamoyladenosine modification"/>
    <property type="evidence" value="ECO:0007669"/>
    <property type="project" value="UniProtKB-UniRule"/>
</dbReference>
<dbReference type="CDD" id="cd24133">
    <property type="entry name" value="ASKHA_NBD_TsaD_bac"/>
    <property type="match status" value="1"/>
</dbReference>
<dbReference type="FunFam" id="3.30.420.40:FF:000012">
    <property type="entry name" value="tRNA N6-adenosine threonylcarbamoyltransferase"/>
    <property type="match status" value="1"/>
</dbReference>
<dbReference type="FunFam" id="3.30.420.40:FF:000040">
    <property type="entry name" value="tRNA N6-adenosine threonylcarbamoyltransferase"/>
    <property type="match status" value="1"/>
</dbReference>
<dbReference type="Gene3D" id="3.30.420.40">
    <property type="match status" value="2"/>
</dbReference>
<dbReference type="HAMAP" id="MF_01445">
    <property type="entry name" value="TsaD"/>
    <property type="match status" value="1"/>
</dbReference>
<dbReference type="InterPro" id="IPR043129">
    <property type="entry name" value="ATPase_NBD"/>
</dbReference>
<dbReference type="InterPro" id="IPR000905">
    <property type="entry name" value="Gcp-like_dom"/>
</dbReference>
<dbReference type="InterPro" id="IPR017861">
    <property type="entry name" value="KAE1/TsaD"/>
</dbReference>
<dbReference type="InterPro" id="IPR022450">
    <property type="entry name" value="TsaD"/>
</dbReference>
<dbReference type="NCBIfam" id="TIGR00329">
    <property type="entry name" value="gcp_kae1"/>
    <property type="match status" value="1"/>
</dbReference>
<dbReference type="NCBIfam" id="TIGR03723">
    <property type="entry name" value="T6A_TsaD_YgjD"/>
    <property type="match status" value="1"/>
</dbReference>
<dbReference type="PANTHER" id="PTHR11735">
    <property type="entry name" value="TRNA N6-ADENOSINE THREONYLCARBAMOYLTRANSFERASE"/>
    <property type="match status" value="1"/>
</dbReference>
<dbReference type="PANTHER" id="PTHR11735:SF6">
    <property type="entry name" value="TRNA N6-ADENOSINE THREONYLCARBAMOYLTRANSFERASE, MITOCHONDRIAL"/>
    <property type="match status" value="1"/>
</dbReference>
<dbReference type="Pfam" id="PF00814">
    <property type="entry name" value="TsaD"/>
    <property type="match status" value="1"/>
</dbReference>
<dbReference type="PRINTS" id="PR00789">
    <property type="entry name" value="OSIALOPTASE"/>
</dbReference>
<dbReference type="SUPFAM" id="SSF53067">
    <property type="entry name" value="Actin-like ATPase domain"/>
    <property type="match status" value="2"/>
</dbReference>
<protein>
    <recommendedName>
        <fullName evidence="1">tRNA N6-adenosine threonylcarbamoyltransferase</fullName>
        <ecNumber evidence="1">2.3.1.234</ecNumber>
    </recommendedName>
    <alternativeName>
        <fullName evidence="1">N6-L-threonylcarbamoyladenine synthase</fullName>
        <shortName evidence="1">t(6)A synthase</shortName>
    </alternativeName>
    <alternativeName>
        <fullName evidence="1">t(6)A37 threonylcarbamoyladenosine biosynthesis protein TsaD</fullName>
    </alternativeName>
    <alternativeName>
        <fullName evidence="1">tRNA threonylcarbamoyladenosine biosynthesis protein TsaD</fullName>
    </alternativeName>
</protein>
<keyword id="KW-0012">Acyltransferase</keyword>
<keyword id="KW-0963">Cytoplasm</keyword>
<keyword id="KW-0408">Iron</keyword>
<keyword id="KW-0479">Metal-binding</keyword>
<keyword id="KW-1185">Reference proteome</keyword>
<keyword id="KW-0808">Transferase</keyword>
<keyword id="KW-0819">tRNA processing</keyword>
<feature type="chain" id="PRO_0000303375" description="tRNA N6-adenosine threonylcarbamoyltransferase">
    <location>
        <begin position="1"/>
        <end position="340"/>
    </location>
</feature>
<feature type="binding site" evidence="1">
    <location>
        <position position="111"/>
    </location>
    <ligand>
        <name>Fe cation</name>
        <dbReference type="ChEBI" id="CHEBI:24875"/>
    </ligand>
</feature>
<feature type="binding site" evidence="1">
    <location>
        <position position="115"/>
    </location>
    <ligand>
        <name>Fe cation</name>
        <dbReference type="ChEBI" id="CHEBI:24875"/>
    </ligand>
</feature>
<feature type="binding site" evidence="1">
    <location>
        <begin position="133"/>
        <end position="137"/>
    </location>
    <ligand>
        <name>substrate</name>
    </ligand>
</feature>
<feature type="binding site" evidence="1">
    <location>
        <position position="166"/>
    </location>
    <ligand>
        <name>substrate</name>
    </ligand>
</feature>
<feature type="binding site" evidence="1">
    <location>
        <position position="179"/>
    </location>
    <ligand>
        <name>substrate</name>
    </ligand>
</feature>
<feature type="binding site" evidence="1">
    <location>
        <position position="183"/>
    </location>
    <ligand>
        <name>substrate</name>
    </ligand>
</feature>
<feature type="binding site" evidence="1">
    <location>
        <position position="272"/>
    </location>
    <ligand>
        <name>substrate</name>
    </ligand>
</feature>
<feature type="binding site" evidence="1">
    <location>
        <position position="300"/>
    </location>
    <ligand>
        <name>Fe cation</name>
        <dbReference type="ChEBI" id="CHEBI:24875"/>
    </ligand>
</feature>
<name>TSAD_GEOSL</name>
<proteinExistence type="inferred from homology"/>
<sequence>MLVLAIETSCDETAAALVRDGRSILSSVVSSQVKDHAVYGGVVPEIASRKHLETIPAVIGEALRLADVTLDHVEGVAVTQGPGLAGALLVGLSVAKSIAFARRLPLVGVNHIEAHLAAIFLEREVAYPYLALVVSGGHSHLYRVDGIGRCTTLGQTLDDAAGEAFDKVAKLLGLPYPGGIEIDRLASAGDPDAIAFPRPLLHDGSFNFSFSGLKTAVLSAVKKQGLPEGKSLADFCASFQKAVCHVLVEKTFRAAEAAGIDRVVVAGGVACNSALRREMAHAAAARGVELMIPSPSLCGDNAAMIAVPGDYYLRCGEQGGLALDARVNWPLDLLGSGREG</sequence>
<organism>
    <name type="scientific">Geobacter sulfurreducens (strain ATCC 51573 / DSM 12127 / PCA)</name>
    <dbReference type="NCBI Taxonomy" id="243231"/>
    <lineage>
        <taxon>Bacteria</taxon>
        <taxon>Pseudomonadati</taxon>
        <taxon>Thermodesulfobacteriota</taxon>
        <taxon>Desulfuromonadia</taxon>
        <taxon>Geobacterales</taxon>
        <taxon>Geobacteraceae</taxon>
        <taxon>Geobacter</taxon>
    </lineage>
</organism>
<comment type="function">
    <text evidence="1">Required for the formation of a threonylcarbamoyl group on adenosine at position 37 (t(6)A37) in tRNAs that read codons beginning with adenine. Is involved in the transfer of the threonylcarbamoyl moiety of threonylcarbamoyl-AMP (TC-AMP) to the N6 group of A37, together with TsaE and TsaB. TsaD likely plays a direct catalytic role in this reaction.</text>
</comment>
<comment type="catalytic activity">
    <reaction evidence="1">
        <text>L-threonylcarbamoyladenylate + adenosine(37) in tRNA = N(6)-L-threonylcarbamoyladenosine(37) in tRNA + AMP + H(+)</text>
        <dbReference type="Rhea" id="RHEA:37059"/>
        <dbReference type="Rhea" id="RHEA-COMP:10162"/>
        <dbReference type="Rhea" id="RHEA-COMP:10163"/>
        <dbReference type="ChEBI" id="CHEBI:15378"/>
        <dbReference type="ChEBI" id="CHEBI:73682"/>
        <dbReference type="ChEBI" id="CHEBI:74411"/>
        <dbReference type="ChEBI" id="CHEBI:74418"/>
        <dbReference type="ChEBI" id="CHEBI:456215"/>
        <dbReference type="EC" id="2.3.1.234"/>
    </reaction>
</comment>
<comment type="cofactor">
    <cofactor evidence="1">
        <name>Fe(2+)</name>
        <dbReference type="ChEBI" id="CHEBI:29033"/>
    </cofactor>
    <text evidence="1">Binds 1 Fe(2+) ion per subunit.</text>
</comment>
<comment type="subcellular location">
    <subcellularLocation>
        <location evidence="1">Cytoplasm</location>
    </subcellularLocation>
</comment>
<comment type="similarity">
    <text evidence="1">Belongs to the KAE1 / TsaD family.</text>
</comment>
<gene>
    <name evidence="1" type="primary">tsaD</name>
    <name type="synonym">gcp</name>
    <name type="ordered locus">GSU1865</name>
</gene>
<evidence type="ECO:0000255" key="1">
    <source>
        <dbReference type="HAMAP-Rule" id="MF_01445"/>
    </source>
</evidence>